<evidence type="ECO:0000255" key="1">
    <source>
        <dbReference type="HAMAP-Rule" id="MF_01396"/>
    </source>
</evidence>
<organism>
    <name type="scientific">Nicotiana tomentosiformis</name>
    <name type="common">Tobacco</name>
    <dbReference type="NCBI Taxonomy" id="4098"/>
    <lineage>
        <taxon>Eukaryota</taxon>
        <taxon>Viridiplantae</taxon>
        <taxon>Streptophyta</taxon>
        <taxon>Embryophyta</taxon>
        <taxon>Tracheophyta</taxon>
        <taxon>Spermatophyta</taxon>
        <taxon>Magnoliopsida</taxon>
        <taxon>eudicotyledons</taxon>
        <taxon>Gunneridae</taxon>
        <taxon>Pentapetalae</taxon>
        <taxon>asterids</taxon>
        <taxon>lamiids</taxon>
        <taxon>Solanales</taxon>
        <taxon>Solanaceae</taxon>
        <taxon>Nicotianoideae</taxon>
        <taxon>Nicotianeae</taxon>
        <taxon>Nicotiana</taxon>
    </lineage>
</organism>
<feature type="chain" id="PRO_0000362939" description="ATP synthase subunit c, chloroplastic">
    <location>
        <begin position="1"/>
        <end position="81"/>
    </location>
</feature>
<feature type="transmembrane region" description="Helical" evidence="1">
    <location>
        <begin position="3"/>
        <end position="23"/>
    </location>
</feature>
<feature type="transmembrane region" description="Helical" evidence="1">
    <location>
        <begin position="57"/>
        <end position="77"/>
    </location>
</feature>
<feature type="site" description="Reversibly protonated during proton transport" evidence="1">
    <location>
        <position position="61"/>
    </location>
</feature>
<geneLocation type="chloroplast"/>
<comment type="function">
    <text evidence="1">F(1)F(0) ATP synthase produces ATP from ADP in the presence of a proton or sodium gradient. F-type ATPases consist of two structural domains, F(1) containing the extramembraneous catalytic core and F(0) containing the membrane proton channel, linked together by a central stalk and a peripheral stalk. During catalysis, ATP synthesis in the catalytic domain of F(1) is coupled via a rotary mechanism of the central stalk subunits to proton translocation.</text>
</comment>
<comment type="function">
    <text evidence="1">Key component of the F(0) channel; it plays a direct role in translocation across the membrane. A homomeric c-ring of between 10-14 subunits forms the central stalk rotor element with the F(1) delta and epsilon subunits.</text>
</comment>
<comment type="subunit">
    <text evidence="1">F-type ATPases have 2 components, F(1) - the catalytic core - and F(0) - the membrane proton channel. F(1) has five subunits: alpha(3), beta(3), gamma(1), delta(1), epsilon(1). F(0) has four main subunits: a(1), b(1), b'(1) and c(10-14). The alpha and beta chains form an alternating ring which encloses part of the gamma chain. F(1) is attached to F(0) by a central stalk formed by the gamma and epsilon chains, while a peripheral stalk is formed by the delta, b and b' chains.</text>
</comment>
<comment type="subcellular location">
    <subcellularLocation>
        <location evidence="1">Plastid</location>
        <location evidence="1">Chloroplast thylakoid membrane</location>
        <topology evidence="1">Multi-pass membrane protein</topology>
    </subcellularLocation>
</comment>
<comment type="miscellaneous">
    <text>In plastids the F-type ATPase is also known as CF(1)CF(0).</text>
</comment>
<comment type="similarity">
    <text evidence="1">Belongs to the ATPase C chain family.</text>
</comment>
<name>ATPH_NICTO</name>
<proteinExistence type="inferred from homology"/>
<keyword id="KW-0066">ATP synthesis</keyword>
<keyword id="KW-0138">CF(0)</keyword>
<keyword id="KW-0150">Chloroplast</keyword>
<keyword id="KW-0375">Hydrogen ion transport</keyword>
<keyword id="KW-0406">Ion transport</keyword>
<keyword id="KW-0446">Lipid-binding</keyword>
<keyword id="KW-0472">Membrane</keyword>
<keyword id="KW-0934">Plastid</keyword>
<keyword id="KW-0793">Thylakoid</keyword>
<keyword id="KW-0812">Transmembrane</keyword>
<keyword id="KW-1133">Transmembrane helix</keyword>
<keyword id="KW-0813">Transport</keyword>
<gene>
    <name evidence="1" type="primary">atpH</name>
</gene>
<protein>
    <recommendedName>
        <fullName evidence="1">ATP synthase subunit c, chloroplastic</fullName>
    </recommendedName>
    <alternativeName>
        <fullName evidence="1">ATP synthase F(0) sector subunit c</fullName>
    </alternativeName>
    <alternativeName>
        <fullName evidence="1">ATPase subunit III</fullName>
    </alternativeName>
    <alternativeName>
        <fullName evidence="1">F-type ATPase subunit c</fullName>
        <shortName evidence="1">F-ATPase subunit c</shortName>
    </alternativeName>
    <alternativeName>
        <fullName evidence="1">Lipid-binding protein</fullName>
    </alternativeName>
</protein>
<reference key="1">
    <citation type="journal article" date="2006" name="Mol. Genet. Genomics">
        <title>The chloroplast genome of Nicotiana sylvestris and Nicotiana tomentosiformis: complete sequencing confirms that the Nicotiana sylvestris progenitor is the maternal genome donor of Nicotiana tabacum.</title>
        <authorList>
            <person name="Yukawa M."/>
            <person name="Tsudzuki T."/>
            <person name="Sugiura M."/>
        </authorList>
    </citation>
    <scope>NUCLEOTIDE SEQUENCE [LARGE SCALE GENOMIC DNA]</scope>
</reference>
<dbReference type="EMBL" id="AB240139">
    <property type="protein sequence ID" value="BAE47984.1"/>
    <property type="molecule type" value="Genomic_DNA"/>
</dbReference>
<dbReference type="RefSeq" id="YP_398846.1">
    <property type="nucleotide sequence ID" value="NC_007602.1"/>
</dbReference>
<dbReference type="SMR" id="Q33C51"/>
<dbReference type="GeneID" id="3776341"/>
<dbReference type="KEGG" id="nto:3776341"/>
<dbReference type="OrthoDB" id="438052at2759"/>
<dbReference type="GO" id="GO:0009535">
    <property type="term" value="C:chloroplast thylakoid membrane"/>
    <property type="evidence" value="ECO:0007669"/>
    <property type="project" value="UniProtKB-SubCell"/>
</dbReference>
<dbReference type="GO" id="GO:0045259">
    <property type="term" value="C:proton-transporting ATP synthase complex"/>
    <property type="evidence" value="ECO:0007669"/>
    <property type="project" value="UniProtKB-KW"/>
</dbReference>
<dbReference type="GO" id="GO:0033177">
    <property type="term" value="C:proton-transporting two-sector ATPase complex, proton-transporting domain"/>
    <property type="evidence" value="ECO:0007669"/>
    <property type="project" value="InterPro"/>
</dbReference>
<dbReference type="GO" id="GO:0008289">
    <property type="term" value="F:lipid binding"/>
    <property type="evidence" value="ECO:0007669"/>
    <property type="project" value="UniProtKB-KW"/>
</dbReference>
<dbReference type="GO" id="GO:0046933">
    <property type="term" value="F:proton-transporting ATP synthase activity, rotational mechanism"/>
    <property type="evidence" value="ECO:0007669"/>
    <property type="project" value="UniProtKB-UniRule"/>
</dbReference>
<dbReference type="CDD" id="cd18183">
    <property type="entry name" value="ATP-synt_Fo_c_ATPH"/>
    <property type="match status" value="1"/>
</dbReference>
<dbReference type="FunFam" id="1.20.20.10:FF:000001">
    <property type="entry name" value="ATP synthase subunit c, chloroplastic"/>
    <property type="match status" value="1"/>
</dbReference>
<dbReference type="Gene3D" id="1.20.20.10">
    <property type="entry name" value="F1F0 ATP synthase subunit C"/>
    <property type="match status" value="1"/>
</dbReference>
<dbReference type="HAMAP" id="MF_01396">
    <property type="entry name" value="ATP_synth_c_bact"/>
    <property type="match status" value="1"/>
</dbReference>
<dbReference type="InterPro" id="IPR005953">
    <property type="entry name" value="ATP_synth_csu_bac/chlpt"/>
</dbReference>
<dbReference type="InterPro" id="IPR000454">
    <property type="entry name" value="ATP_synth_F0_csu"/>
</dbReference>
<dbReference type="InterPro" id="IPR020537">
    <property type="entry name" value="ATP_synth_F0_csu_DDCD_BS"/>
</dbReference>
<dbReference type="InterPro" id="IPR038662">
    <property type="entry name" value="ATP_synth_F0_csu_sf"/>
</dbReference>
<dbReference type="InterPro" id="IPR002379">
    <property type="entry name" value="ATPase_proteolipid_c-like_dom"/>
</dbReference>
<dbReference type="InterPro" id="IPR035921">
    <property type="entry name" value="F/V-ATP_Csub_sf"/>
</dbReference>
<dbReference type="NCBIfam" id="TIGR01260">
    <property type="entry name" value="ATP_synt_c"/>
    <property type="match status" value="1"/>
</dbReference>
<dbReference type="NCBIfam" id="NF005608">
    <property type="entry name" value="PRK07354.1"/>
    <property type="match status" value="1"/>
</dbReference>
<dbReference type="PANTHER" id="PTHR10031">
    <property type="entry name" value="ATP SYNTHASE LIPID-BINDING PROTEIN, MITOCHONDRIAL"/>
    <property type="match status" value="1"/>
</dbReference>
<dbReference type="PANTHER" id="PTHR10031:SF0">
    <property type="entry name" value="ATPASE PROTEIN 9"/>
    <property type="match status" value="1"/>
</dbReference>
<dbReference type="Pfam" id="PF00137">
    <property type="entry name" value="ATP-synt_C"/>
    <property type="match status" value="1"/>
</dbReference>
<dbReference type="PRINTS" id="PR00124">
    <property type="entry name" value="ATPASEC"/>
</dbReference>
<dbReference type="SUPFAM" id="SSF81333">
    <property type="entry name" value="F1F0 ATP synthase subunit C"/>
    <property type="match status" value="1"/>
</dbReference>
<dbReference type="PROSITE" id="PS00605">
    <property type="entry name" value="ATPASE_C"/>
    <property type="match status" value="1"/>
</dbReference>
<sequence length="81" mass="7990">MNPLISAASVIAAGLAVGLASIGPGVGQGTAAGQAVEGIARQPEAEGKIRGTLLLSLAFMEALTIYGLVVALALLFANPFV</sequence>
<accession>Q33C51</accession>